<evidence type="ECO:0000250" key="1"/>
<evidence type="ECO:0000255" key="2">
    <source>
        <dbReference type="HAMAP-Rule" id="MF_01025"/>
    </source>
</evidence>
<name>LEU1_SHIFL</name>
<comment type="function">
    <text evidence="2">Catalyzes the condensation of the acetyl group of acetyl-CoA with 3-methyl-2-oxobutanoate (2-ketoisovalerate) to form 3-carboxy-3-hydroxy-4-methylpentanoate (2-isopropylmalate).</text>
</comment>
<comment type="catalytic activity">
    <reaction evidence="2">
        <text>3-methyl-2-oxobutanoate + acetyl-CoA + H2O = (2S)-2-isopropylmalate + CoA + H(+)</text>
        <dbReference type="Rhea" id="RHEA:21524"/>
        <dbReference type="ChEBI" id="CHEBI:1178"/>
        <dbReference type="ChEBI" id="CHEBI:11851"/>
        <dbReference type="ChEBI" id="CHEBI:15377"/>
        <dbReference type="ChEBI" id="CHEBI:15378"/>
        <dbReference type="ChEBI" id="CHEBI:57287"/>
        <dbReference type="ChEBI" id="CHEBI:57288"/>
        <dbReference type="EC" id="2.3.3.13"/>
    </reaction>
</comment>
<comment type="cofactor">
    <cofactor evidence="2">
        <name>Mn(2+)</name>
        <dbReference type="ChEBI" id="CHEBI:29035"/>
    </cofactor>
</comment>
<comment type="pathway">
    <text evidence="2">Amino-acid biosynthesis; L-leucine biosynthesis; L-leucine from 3-methyl-2-oxobutanoate: step 1/4.</text>
</comment>
<comment type="subunit">
    <text evidence="2">Homodimer.</text>
</comment>
<comment type="subcellular location">
    <subcellularLocation>
        <location evidence="2">Cytoplasm</location>
    </subcellularLocation>
</comment>
<comment type="similarity">
    <text evidence="2">Belongs to the alpha-IPM synthase/homocitrate synthase family. LeuA type 1 subfamily.</text>
</comment>
<gene>
    <name evidence="2" type="primary">leuA</name>
    <name type="ordered locus">SF0069</name>
    <name type="ordered locus">S0071</name>
</gene>
<accession>Q83SP0</accession>
<feature type="initiator methionine" description="Removed" evidence="1">
    <location>
        <position position="1"/>
    </location>
</feature>
<feature type="chain" id="PRO_0000140377" description="2-isopropylmalate synthase">
    <location>
        <begin position="2"/>
        <end position="523"/>
    </location>
</feature>
<feature type="domain" description="Pyruvate carboxyltransferase" evidence="2">
    <location>
        <begin position="5"/>
        <end position="267"/>
    </location>
</feature>
<feature type="region of interest" description="Regulatory domain" evidence="2">
    <location>
        <begin position="392"/>
        <end position="523"/>
    </location>
</feature>
<feature type="binding site" evidence="2">
    <location>
        <position position="14"/>
    </location>
    <ligand>
        <name>Mn(2+)</name>
        <dbReference type="ChEBI" id="CHEBI:29035"/>
    </ligand>
</feature>
<feature type="binding site" evidence="2">
    <location>
        <position position="202"/>
    </location>
    <ligand>
        <name>Mn(2+)</name>
        <dbReference type="ChEBI" id="CHEBI:29035"/>
    </ligand>
</feature>
<feature type="binding site" evidence="2">
    <location>
        <position position="204"/>
    </location>
    <ligand>
        <name>Mn(2+)</name>
        <dbReference type="ChEBI" id="CHEBI:29035"/>
    </ligand>
</feature>
<feature type="binding site" evidence="2">
    <location>
        <position position="238"/>
    </location>
    <ligand>
        <name>Mn(2+)</name>
        <dbReference type="ChEBI" id="CHEBI:29035"/>
    </ligand>
</feature>
<proteinExistence type="inferred from homology"/>
<protein>
    <recommendedName>
        <fullName evidence="2">2-isopropylmalate synthase</fullName>
        <ecNumber evidence="2">2.3.3.13</ecNumber>
    </recommendedName>
    <alternativeName>
        <fullName evidence="2">Alpha-IPM synthase</fullName>
    </alternativeName>
    <alternativeName>
        <fullName evidence="2">Alpha-isopropylmalate synthase</fullName>
    </alternativeName>
</protein>
<organism>
    <name type="scientific">Shigella flexneri</name>
    <dbReference type="NCBI Taxonomy" id="623"/>
    <lineage>
        <taxon>Bacteria</taxon>
        <taxon>Pseudomonadati</taxon>
        <taxon>Pseudomonadota</taxon>
        <taxon>Gammaproteobacteria</taxon>
        <taxon>Enterobacterales</taxon>
        <taxon>Enterobacteriaceae</taxon>
        <taxon>Shigella</taxon>
    </lineage>
</organism>
<reference key="1">
    <citation type="journal article" date="2002" name="Nucleic Acids Res.">
        <title>Genome sequence of Shigella flexneri 2a: insights into pathogenicity through comparison with genomes of Escherichia coli K12 and O157.</title>
        <authorList>
            <person name="Jin Q."/>
            <person name="Yuan Z."/>
            <person name="Xu J."/>
            <person name="Wang Y."/>
            <person name="Shen Y."/>
            <person name="Lu W."/>
            <person name="Wang J."/>
            <person name="Liu H."/>
            <person name="Yang J."/>
            <person name="Yang F."/>
            <person name="Zhang X."/>
            <person name="Zhang J."/>
            <person name="Yang G."/>
            <person name="Wu H."/>
            <person name="Qu D."/>
            <person name="Dong J."/>
            <person name="Sun L."/>
            <person name="Xue Y."/>
            <person name="Zhao A."/>
            <person name="Gao Y."/>
            <person name="Zhu J."/>
            <person name="Kan B."/>
            <person name="Ding K."/>
            <person name="Chen S."/>
            <person name="Cheng H."/>
            <person name="Yao Z."/>
            <person name="He B."/>
            <person name="Chen R."/>
            <person name="Ma D."/>
            <person name="Qiang B."/>
            <person name="Wen Y."/>
            <person name="Hou Y."/>
            <person name="Yu J."/>
        </authorList>
    </citation>
    <scope>NUCLEOTIDE SEQUENCE [LARGE SCALE GENOMIC DNA]</scope>
    <source>
        <strain>301 / Serotype 2a</strain>
    </source>
</reference>
<reference key="2">
    <citation type="journal article" date="2003" name="Infect. Immun.">
        <title>Complete genome sequence and comparative genomics of Shigella flexneri serotype 2a strain 2457T.</title>
        <authorList>
            <person name="Wei J."/>
            <person name="Goldberg M.B."/>
            <person name="Burland V."/>
            <person name="Venkatesan M.M."/>
            <person name="Deng W."/>
            <person name="Fournier G."/>
            <person name="Mayhew G.F."/>
            <person name="Plunkett G. III"/>
            <person name="Rose D.J."/>
            <person name="Darling A."/>
            <person name="Mau B."/>
            <person name="Perna N.T."/>
            <person name="Payne S.M."/>
            <person name="Runyen-Janecky L.J."/>
            <person name="Zhou S."/>
            <person name="Schwartz D.C."/>
            <person name="Blattner F.R."/>
        </authorList>
    </citation>
    <scope>NUCLEOTIDE SEQUENCE [LARGE SCALE GENOMIC DNA]</scope>
    <source>
        <strain>ATCC 700930 / 2457T / Serotype 2a</strain>
    </source>
</reference>
<sequence length="523" mass="57344">MSQQVIIFDTTLRDGEQALQASLSVKEKLQIALALERMGVDVMEVGFPVSSPGDFESVQTIARQVKNSRVCALARCVEKDIDVAAESLKVAEAFRIHTFIATSPMHIATKLRSTLDEVIERAIYMVKRARNYTDDVEFSCEDAGRTPIADLARVVEAAINAGATTINIPDTVGYTMPFEFAGIISGLYERVPNIDKAIISVHTHDDLGLAVGNSLAAVHAGARQVEGAMNGIGERAGNCSLEEVIMAIKVRKDILNVHTAINHQEIWRTSQLVSQICNMPIPANKAIVGSGAFAHSSGIHQDGVLKNRENYEIMTPESIGLNQIQLNLTSRSGRAAVKHRMDEMGYKESEYNLDNLYDAFLKLADKKGQVFDYDLEALAFIGKQQEEPEHFRLDYFSVQSGSNDIATAAVKLACGEEVKAEAANGNGPVDAVYQAINRITDYNVELVKYSLTAKGHGKDALGQVDIVTNYNGRRFHGVGLATDIVESSAKAMVHVLNNIWRAAEVEKELQRKTQHNENNKETV</sequence>
<dbReference type="EC" id="2.3.3.13" evidence="2"/>
<dbReference type="EMBL" id="AE005674">
    <property type="protein sequence ID" value="AAN41734.1"/>
    <property type="molecule type" value="Genomic_DNA"/>
</dbReference>
<dbReference type="EMBL" id="AE014073">
    <property type="protein sequence ID" value="AAP15615.1"/>
    <property type="molecule type" value="Genomic_DNA"/>
</dbReference>
<dbReference type="RefSeq" id="NP_706027.1">
    <property type="nucleotide sequence ID" value="NC_004337.2"/>
</dbReference>
<dbReference type="RefSeq" id="WP_000082848.1">
    <property type="nucleotide sequence ID" value="NZ_WPGW01000005.1"/>
</dbReference>
<dbReference type="SMR" id="Q83SP0"/>
<dbReference type="STRING" id="198214.SF0069"/>
<dbReference type="PaxDb" id="198214-SF0069"/>
<dbReference type="GeneID" id="1024546"/>
<dbReference type="KEGG" id="sfl:SF0069"/>
<dbReference type="KEGG" id="sfx:S0071"/>
<dbReference type="PATRIC" id="fig|198214.7.peg.81"/>
<dbReference type="HOGENOM" id="CLU_022158_0_1_6"/>
<dbReference type="UniPathway" id="UPA00048">
    <property type="reaction ID" value="UER00070"/>
</dbReference>
<dbReference type="Proteomes" id="UP000001006">
    <property type="component" value="Chromosome"/>
</dbReference>
<dbReference type="Proteomes" id="UP000002673">
    <property type="component" value="Chromosome"/>
</dbReference>
<dbReference type="GO" id="GO:0005829">
    <property type="term" value="C:cytosol"/>
    <property type="evidence" value="ECO:0007669"/>
    <property type="project" value="TreeGrafter"/>
</dbReference>
<dbReference type="GO" id="GO:0003852">
    <property type="term" value="F:2-isopropylmalate synthase activity"/>
    <property type="evidence" value="ECO:0007669"/>
    <property type="project" value="UniProtKB-UniRule"/>
</dbReference>
<dbReference type="GO" id="GO:0003985">
    <property type="term" value="F:acetyl-CoA C-acetyltransferase activity"/>
    <property type="evidence" value="ECO:0007669"/>
    <property type="project" value="UniProtKB-UniRule"/>
</dbReference>
<dbReference type="GO" id="GO:0030145">
    <property type="term" value="F:manganese ion binding"/>
    <property type="evidence" value="ECO:0007669"/>
    <property type="project" value="UniProtKB-UniRule"/>
</dbReference>
<dbReference type="GO" id="GO:0009098">
    <property type="term" value="P:L-leucine biosynthetic process"/>
    <property type="evidence" value="ECO:0007669"/>
    <property type="project" value="UniProtKB-UniRule"/>
</dbReference>
<dbReference type="CDD" id="cd07940">
    <property type="entry name" value="DRE_TIM_IPMS"/>
    <property type="match status" value="1"/>
</dbReference>
<dbReference type="FunFam" id="1.10.238.260:FF:000001">
    <property type="entry name" value="2-isopropylmalate synthase"/>
    <property type="match status" value="1"/>
</dbReference>
<dbReference type="FunFam" id="3.20.20.70:FF:000010">
    <property type="entry name" value="2-isopropylmalate synthase"/>
    <property type="match status" value="1"/>
</dbReference>
<dbReference type="FunFam" id="3.30.160.270:FF:000001">
    <property type="entry name" value="2-isopropylmalate synthase"/>
    <property type="match status" value="1"/>
</dbReference>
<dbReference type="Gene3D" id="1.10.238.260">
    <property type="match status" value="1"/>
</dbReference>
<dbReference type="Gene3D" id="3.30.160.270">
    <property type="match status" value="1"/>
</dbReference>
<dbReference type="Gene3D" id="3.20.20.70">
    <property type="entry name" value="Aldolase class I"/>
    <property type="match status" value="1"/>
</dbReference>
<dbReference type="HAMAP" id="MF_01025">
    <property type="entry name" value="LeuA_type1"/>
    <property type="match status" value="1"/>
</dbReference>
<dbReference type="InterPro" id="IPR050073">
    <property type="entry name" value="2-IPM_HCS-like"/>
</dbReference>
<dbReference type="InterPro" id="IPR013709">
    <property type="entry name" value="2-isopropylmalate_synth_dimer"/>
</dbReference>
<dbReference type="InterPro" id="IPR002034">
    <property type="entry name" value="AIPM/Hcit_synth_CS"/>
</dbReference>
<dbReference type="InterPro" id="IPR013785">
    <property type="entry name" value="Aldolase_TIM"/>
</dbReference>
<dbReference type="InterPro" id="IPR054691">
    <property type="entry name" value="LeuA/HCS_post-cat"/>
</dbReference>
<dbReference type="InterPro" id="IPR036230">
    <property type="entry name" value="LeuA_allosteric_dom_sf"/>
</dbReference>
<dbReference type="InterPro" id="IPR005671">
    <property type="entry name" value="LeuA_bact_synth"/>
</dbReference>
<dbReference type="InterPro" id="IPR000891">
    <property type="entry name" value="PYR_CT"/>
</dbReference>
<dbReference type="NCBIfam" id="TIGR00973">
    <property type="entry name" value="leuA_bact"/>
    <property type="match status" value="1"/>
</dbReference>
<dbReference type="NCBIfam" id="NF002084">
    <property type="entry name" value="PRK00915.1-1"/>
    <property type="match status" value="1"/>
</dbReference>
<dbReference type="NCBIfam" id="NF002086">
    <property type="entry name" value="PRK00915.1-3"/>
    <property type="match status" value="1"/>
</dbReference>
<dbReference type="PANTHER" id="PTHR10277:SF9">
    <property type="entry name" value="2-ISOPROPYLMALATE SYNTHASE 1, CHLOROPLASTIC-RELATED"/>
    <property type="match status" value="1"/>
</dbReference>
<dbReference type="PANTHER" id="PTHR10277">
    <property type="entry name" value="HOMOCITRATE SYNTHASE-RELATED"/>
    <property type="match status" value="1"/>
</dbReference>
<dbReference type="Pfam" id="PF22617">
    <property type="entry name" value="HCS_D2"/>
    <property type="match status" value="1"/>
</dbReference>
<dbReference type="Pfam" id="PF00682">
    <property type="entry name" value="HMGL-like"/>
    <property type="match status" value="1"/>
</dbReference>
<dbReference type="Pfam" id="PF08502">
    <property type="entry name" value="LeuA_dimer"/>
    <property type="match status" value="1"/>
</dbReference>
<dbReference type="SMART" id="SM00917">
    <property type="entry name" value="LeuA_dimer"/>
    <property type="match status" value="1"/>
</dbReference>
<dbReference type="SUPFAM" id="SSF110921">
    <property type="entry name" value="2-isopropylmalate synthase LeuA, allosteric (dimerisation) domain"/>
    <property type="match status" value="1"/>
</dbReference>
<dbReference type="SUPFAM" id="SSF51569">
    <property type="entry name" value="Aldolase"/>
    <property type="match status" value="1"/>
</dbReference>
<dbReference type="PROSITE" id="PS00815">
    <property type="entry name" value="AIPM_HOMOCIT_SYNTH_1"/>
    <property type="match status" value="1"/>
</dbReference>
<dbReference type="PROSITE" id="PS00816">
    <property type="entry name" value="AIPM_HOMOCIT_SYNTH_2"/>
    <property type="match status" value="1"/>
</dbReference>
<dbReference type="PROSITE" id="PS50991">
    <property type="entry name" value="PYR_CT"/>
    <property type="match status" value="1"/>
</dbReference>
<keyword id="KW-0028">Amino-acid biosynthesis</keyword>
<keyword id="KW-0100">Branched-chain amino acid biosynthesis</keyword>
<keyword id="KW-0963">Cytoplasm</keyword>
<keyword id="KW-0432">Leucine biosynthesis</keyword>
<keyword id="KW-0464">Manganese</keyword>
<keyword id="KW-0479">Metal-binding</keyword>
<keyword id="KW-1185">Reference proteome</keyword>
<keyword id="KW-0808">Transferase</keyword>